<sequence>PAPFEQGSAKKGATLFKTRCAQCHTIEAGGPHKVGPNLHGIFSRHSGQAEGYSYTDANKRAGVEWAEPTMSDYLENPKKYIPGTKMAFGGLKKAKDRNDLVTYMLEASK</sequence>
<name>CYC_PICKU</name>
<dbReference type="PIR" id="A91919">
    <property type="entry name" value="CCCK"/>
</dbReference>
<dbReference type="BMRB" id="P00041"/>
<dbReference type="SMR" id="P00041"/>
<dbReference type="VEuPathDB" id="FungiDB:C5L36_0B08680"/>
<dbReference type="eggNOG" id="KOG3453">
    <property type="taxonomic scope" value="Eukaryota"/>
</dbReference>
<dbReference type="GO" id="GO:0005758">
    <property type="term" value="C:mitochondrial intermembrane space"/>
    <property type="evidence" value="ECO:0007669"/>
    <property type="project" value="UniProtKB-SubCell"/>
</dbReference>
<dbReference type="GO" id="GO:0009055">
    <property type="term" value="F:electron transfer activity"/>
    <property type="evidence" value="ECO:0007669"/>
    <property type="project" value="InterPro"/>
</dbReference>
<dbReference type="GO" id="GO:0020037">
    <property type="term" value="F:heme binding"/>
    <property type="evidence" value="ECO:0007669"/>
    <property type="project" value="InterPro"/>
</dbReference>
<dbReference type="GO" id="GO:0046872">
    <property type="term" value="F:metal ion binding"/>
    <property type="evidence" value="ECO:0007669"/>
    <property type="project" value="UniProtKB-KW"/>
</dbReference>
<dbReference type="FunFam" id="1.10.760.10:FF:000001">
    <property type="entry name" value="Cytochrome c iso-1"/>
    <property type="match status" value="1"/>
</dbReference>
<dbReference type="Gene3D" id="1.10.760.10">
    <property type="entry name" value="Cytochrome c-like domain"/>
    <property type="match status" value="1"/>
</dbReference>
<dbReference type="InterPro" id="IPR009056">
    <property type="entry name" value="Cyt_c-like_dom"/>
</dbReference>
<dbReference type="InterPro" id="IPR036909">
    <property type="entry name" value="Cyt_c-like_dom_sf"/>
</dbReference>
<dbReference type="InterPro" id="IPR002327">
    <property type="entry name" value="Cyt_c_1A/1B"/>
</dbReference>
<dbReference type="PANTHER" id="PTHR11961">
    <property type="entry name" value="CYTOCHROME C"/>
    <property type="match status" value="1"/>
</dbReference>
<dbReference type="Pfam" id="PF00034">
    <property type="entry name" value="Cytochrom_C"/>
    <property type="match status" value="1"/>
</dbReference>
<dbReference type="PRINTS" id="PR00604">
    <property type="entry name" value="CYTCHRMECIAB"/>
</dbReference>
<dbReference type="SUPFAM" id="SSF46626">
    <property type="entry name" value="Cytochrome c"/>
    <property type="match status" value="1"/>
</dbReference>
<dbReference type="PROSITE" id="PS51007">
    <property type="entry name" value="CYTC"/>
    <property type="match status" value="1"/>
</dbReference>
<accession>P00041</accession>
<reference key="1">
    <citation type="journal article" date="1968" name="J. Biochem.">
        <title>The amino acid sequence of cytochrome C from Candida krusei.</title>
        <authorList>
            <person name="Narita K."/>
            <person name="Titani K."/>
        </authorList>
    </citation>
    <scope>PROTEIN SEQUENCE</scope>
</reference>
<reference key="2">
    <citation type="journal article" date="1972" name="Eur. J. Biochem.">
        <title>Candida krusei chtochrome c: a correction to the sequence. Glutamine-16, an invariant residue in mitochondrial cytochrome c?</title>
        <authorList>
            <person name="Lederer F."/>
        </authorList>
    </citation>
    <scope>SEQUENCE REVISION TO 22</scope>
</reference>
<reference key="3">
    <citation type="journal article" date="1973" name="FEBS Lett.">
        <title>Solid-phase Edman degradation of a protein: N-terminal sequence of cytochrome c from Candida krusei.</title>
        <authorList>
            <person name="Machleidt W."/>
            <person name="Wachter E."/>
            <person name="Scheulen M."/>
            <person name="Otto J."/>
        </authorList>
    </citation>
    <scope>SEQUENCE REVISION TO 22</scope>
</reference>
<reference key="4">
    <citation type="journal article" date="1970" name="J. Biol. Chem.">
        <title>Identification and location of epsilon-N-trimethyllysine in yeast cytochromes c.</title>
        <authorList>
            <person name="Delange R.J."/>
            <person name="Glazer A.N."/>
            <person name="Smith E.L."/>
        </authorList>
    </citation>
    <scope>METHYLATION AT LYS-78</scope>
</reference>
<feature type="chain" id="PRO_0000108326" description="Cytochrome c">
    <location>
        <begin position="1"/>
        <end position="109"/>
    </location>
</feature>
<feature type="binding site" description="covalent" evidence="1 2">
    <location>
        <position position="20"/>
    </location>
    <ligand>
        <name>heme c</name>
        <dbReference type="ChEBI" id="CHEBI:61717"/>
    </ligand>
</feature>
<feature type="binding site" description="covalent" evidence="1 2">
    <location>
        <position position="23"/>
    </location>
    <ligand>
        <name>heme c</name>
        <dbReference type="ChEBI" id="CHEBI:61717"/>
    </ligand>
</feature>
<feature type="binding site" description="axial binding residue">
    <location>
        <position position="24"/>
    </location>
    <ligand>
        <name>heme c</name>
        <dbReference type="ChEBI" id="CHEBI:61717"/>
    </ligand>
    <ligandPart>
        <name>Fe</name>
        <dbReference type="ChEBI" id="CHEBI:18248"/>
    </ligandPart>
</feature>
<feature type="binding site" description="axial binding residue">
    <location>
        <position position="86"/>
    </location>
    <ligand>
        <name>heme c</name>
        <dbReference type="ChEBI" id="CHEBI:61717"/>
    </ligand>
    <ligandPart>
        <name>Fe</name>
        <dbReference type="ChEBI" id="CHEBI:18248"/>
    </ligandPart>
</feature>
<feature type="modified residue" description="N6,N6,N6-trimethyllysine" evidence="4">
    <location>
        <position position="78"/>
    </location>
</feature>
<protein>
    <recommendedName>
        <fullName>Cytochrome c</fullName>
    </recommendedName>
</protein>
<gene>
    <name type="primary">CYC1</name>
</gene>
<organism>
    <name type="scientific">Pichia kudriavzevii</name>
    <name type="common">Yeast</name>
    <name type="synonym">Issatchenkia orientalis</name>
    <dbReference type="NCBI Taxonomy" id="4909"/>
    <lineage>
        <taxon>Eukaryota</taxon>
        <taxon>Fungi</taxon>
        <taxon>Dikarya</taxon>
        <taxon>Ascomycota</taxon>
        <taxon>Saccharomycotina</taxon>
        <taxon>Pichiomycetes</taxon>
        <taxon>Pichiales</taxon>
        <taxon>Pichiaceae</taxon>
        <taxon>Pichia</taxon>
    </lineage>
</organism>
<proteinExistence type="evidence at protein level"/>
<comment type="function">
    <text>Electron carrier protein. The oxidized form of the cytochrome c heme group can accept an electron from the heme group of the cytochrome c1 subunit of cytochrome reductase. Cytochrome c then transfers this electron to the cytochrome oxidase complex, the final protein carrier in the mitochondrial electron-transport chain.</text>
</comment>
<comment type="subcellular location">
    <subcellularLocation>
        <location>Mitochondrion intermembrane space</location>
    </subcellularLocation>
    <text>Loosely associated with the inner membrane.</text>
</comment>
<comment type="PTM">
    <text>Binds 1 heme c group covalently per subunit.</text>
</comment>
<comment type="similarity">
    <text evidence="3">Belongs to the cytochrome c family.</text>
</comment>
<comment type="online information" name="Protein Spotlight">
    <link uri="https://www.proteinspotlight.org/back_issues/076"/>
    <text>Life shuttle - Issue 76 of November 2006</text>
</comment>
<keyword id="KW-0903">Direct protein sequencing</keyword>
<keyword id="KW-0249">Electron transport</keyword>
<keyword id="KW-0349">Heme</keyword>
<keyword id="KW-0408">Iron</keyword>
<keyword id="KW-0479">Metal-binding</keyword>
<keyword id="KW-0488">Methylation</keyword>
<keyword id="KW-0496">Mitochondrion</keyword>
<keyword id="KW-0679">Respiratory chain</keyword>
<keyword id="KW-0813">Transport</keyword>
<evidence type="ECO:0000255" key="1">
    <source>
        <dbReference type="PROSITE-ProRule" id="PRU00433"/>
    </source>
</evidence>
<evidence type="ECO:0000269" key="2">
    <source>
    </source>
</evidence>
<evidence type="ECO:0000305" key="3"/>
<evidence type="ECO:0000305" key="4">
    <source>
    </source>
</evidence>